<sequence>YEDRNFQGRCYECSGDCADLHSYFSRCNSIKVDSGCWMLYERPNFLGHQYFLKKGEYPDYQQWMGFSDSVRSCKVIPQQKGPHKMKIYEKEELKGQMLEVLEDCPSVFELFKNHDINSCNVLEGHWIFYEQPNYRGRQYFLKPGEYKRFSDWGSLNARVSSFRRVLDSC</sequence>
<dbReference type="EMBL" id="K02264">
    <property type="protein sequence ID" value="AAA49516.1"/>
    <property type="molecule type" value="mRNA"/>
</dbReference>
<dbReference type="EMBL" id="X00775">
    <property type="protein sequence ID" value="CAA25351.1"/>
    <property type="molecule type" value="mRNA"/>
</dbReference>
<dbReference type="PIR" id="A02937">
    <property type="entry name" value="CYFGG2"/>
</dbReference>
<dbReference type="PIR" id="T01783">
    <property type="entry name" value="T01783"/>
</dbReference>
<dbReference type="SMR" id="P02531"/>
<dbReference type="GO" id="GO:0005212">
    <property type="term" value="F:structural constituent of eye lens"/>
    <property type="evidence" value="ECO:0007669"/>
    <property type="project" value="UniProtKB-KW"/>
</dbReference>
<dbReference type="GO" id="GO:0002088">
    <property type="term" value="P:lens development in camera-type eye"/>
    <property type="evidence" value="ECO:0007669"/>
    <property type="project" value="TreeGrafter"/>
</dbReference>
<dbReference type="GO" id="GO:0007601">
    <property type="term" value="P:visual perception"/>
    <property type="evidence" value="ECO:0007669"/>
    <property type="project" value="TreeGrafter"/>
</dbReference>
<dbReference type="FunFam" id="2.60.20.10:FF:000001">
    <property type="entry name" value="Crystallin gamma S"/>
    <property type="match status" value="1"/>
</dbReference>
<dbReference type="FunFam" id="2.60.20.10:FF:000003">
    <property type="entry name" value="Crystallin gamma S"/>
    <property type="match status" value="1"/>
</dbReference>
<dbReference type="Gene3D" id="2.60.20.10">
    <property type="entry name" value="Crystallins"/>
    <property type="match status" value="2"/>
</dbReference>
<dbReference type="InterPro" id="IPR050252">
    <property type="entry name" value="Beta/Gamma-Crystallin"/>
</dbReference>
<dbReference type="InterPro" id="IPR001064">
    <property type="entry name" value="Beta/gamma_crystallin"/>
</dbReference>
<dbReference type="InterPro" id="IPR011024">
    <property type="entry name" value="G_crystallin-like"/>
</dbReference>
<dbReference type="PANTHER" id="PTHR11818">
    <property type="entry name" value="BETA/GAMMA CRYSTALLIN"/>
    <property type="match status" value="1"/>
</dbReference>
<dbReference type="PANTHER" id="PTHR11818:SF130">
    <property type="entry name" value="GAMMA-CRYSTALLIN 2"/>
    <property type="match status" value="1"/>
</dbReference>
<dbReference type="Pfam" id="PF00030">
    <property type="entry name" value="Crystall"/>
    <property type="match status" value="2"/>
</dbReference>
<dbReference type="PRINTS" id="PR01367">
    <property type="entry name" value="BGCRYSTALLIN"/>
</dbReference>
<dbReference type="SMART" id="SM00247">
    <property type="entry name" value="XTALbg"/>
    <property type="match status" value="2"/>
</dbReference>
<dbReference type="SUPFAM" id="SSF49695">
    <property type="entry name" value="gamma-Crystallin-like"/>
    <property type="match status" value="1"/>
</dbReference>
<dbReference type="PROSITE" id="PS50915">
    <property type="entry name" value="CRYSTALLIN_BETA_GAMMA"/>
    <property type="match status" value="4"/>
</dbReference>
<keyword id="KW-0273">Eye lens protein</keyword>
<keyword id="KW-0677">Repeat</keyword>
<organism>
    <name type="scientific">Rana temporaria</name>
    <name type="common">European common frog</name>
    <dbReference type="NCBI Taxonomy" id="8407"/>
    <lineage>
        <taxon>Eukaryota</taxon>
        <taxon>Metazoa</taxon>
        <taxon>Chordata</taxon>
        <taxon>Craniata</taxon>
        <taxon>Vertebrata</taxon>
        <taxon>Euteleostomi</taxon>
        <taxon>Amphibia</taxon>
        <taxon>Batrachia</taxon>
        <taxon>Anura</taxon>
        <taxon>Neobatrachia</taxon>
        <taxon>Ranoidea</taxon>
        <taxon>Ranidae</taxon>
        <taxon>Rana</taxon>
        <taxon>Rana</taxon>
    </lineage>
</organism>
<name>CRG2_RANTE</name>
<accession>P02531</accession>
<evidence type="ECO:0000250" key="1"/>
<evidence type="ECO:0000255" key="2">
    <source>
        <dbReference type="PROSITE-ProRule" id="PRU00028"/>
    </source>
</evidence>
<evidence type="ECO:0000305" key="3"/>
<reference key="1">
    <citation type="journal article" date="1984" name="Gene">
        <title>Multiple genes coding for the frog eye lens gamma-crystallins.</title>
        <authorList>
            <person name="Tomarev S.I."/>
            <person name="Zinovieva R.D."/>
            <person name="Chalovka P."/>
            <person name="Krayev A.S."/>
            <person name="Skryabin K.G."/>
            <person name="Gause G.G. Jr."/>
        </authorList>
    </citation>
    <scope>NUCLEOTIDE SEQUENCE [MRNA] OF 1-168</scope>
</reference>
<reference key="2">
    <citation type="journal article" date="1984" name="Dokl. Biochem.">
        <title>Gamma crystallins of the eye lens of the grass frog are coded by a family of multiple nonallelic genes.</title>
        <authorList>
            <person name="Tomarev S.I."/>
            <person name="Zinovieva R.D."/>
            <person name="Dolgilevich S.M."/>
            <person name="Krayev A.S."/>
            <person name="Skryabin K.G."/>
            <person name="Gause G.G. Jr."/>
        </authorList>
    </citation>
    <scope>NUCLEOTIDE SEQUENCE [MRNA] OF 1-168</scope>
</reference>
<reference key="3">
    <citation type="submission" date="1985-09" db="EMBL/GenBank/DDBJ databases">
        <authorList>
            <person name="Tomarev S.I."/>
        </authorList>
    </citation>
    <scope>SEQUENCE REVISION TO 169</scope>
</reference>
<comment type="function">
    <text>Crystallins are the dominant structural components of the vertebrate eye lens.</text>
</comment>
<comment type="subunit">
    <text evidence="1">Monomer.</text>
</comment>
<comment type="domain">
    <text>Has a two-domain beta-structure, folded into four very similar Greek key motifs.</text>
</comment>
<comment type="miscellaneous">
    <text>There are at least four genes coding for non-identical gamma crystallins in this multigene family.</text>
</comment>
<comment type="similarity">
    <text evidence="3">Belongs to the beta/gamma-crystallin family.</text>
</comment>
<proteinExistence type="evidence at transcript level"/>
<protein>
    <recommendedName>
        <fullName>Gamma-crystallin 2</fullName>
    </recommendedName>
    <alternativeName>
        <fullName>Gamma-crystallin II</fullName>
    </alternativeName>
</protein>
<feature type="chain" id="PRO_0000057573" description="Gamma-crystallin 2">
    <location>
        <begin position="1" status="less than"/>
        <end position="169"/>
    </location>
</feature>
<feature type="domain" description="Beta/gamma crystallin 'Greek key' 1" evidence="2">
    <location>
        <begin position="1" status="less than"/>
        <end position="34"/>
    </location>
</feature>
<feature type="domain" description="Beta/gamma crystallin 'Greek key' 2" evidence="2">
    <location>
        <begin position="35"/>
        <end position="77"/>
    </location>
</feature>
<feature type="domain" description="Beta/gamma crystallin 'Greek key' 3" evidence="2">
    <location>
        <begin position="83"/>
        <end position="123"/>
    </location>
</feature>
<feature type="domain" description="Beta/gamma crystallin 'Greek key' 4" evidence="2">
    <location>
        <begin position="124"/>
        <end position="166"/>
    </location>
</feature>
<feature type="region of interest" description="Connecting peptide">
    <location>
        <begin position="78"/>
        <end position="82"/>
    </location>
</feature>
<feature type="non-terminal residue">
    <location>
        <position position="1"/>
    </location>
</feature>